<sequence length="496" mass="57857">MSEEHVHLDESEVYHIRKQKLAELRTGGFNFPNTFRREHLADALLKQYSETEKQTLEQKHVKVSVAGRIVLRRIMGKASFFHIQDVSGRIQVYLRSNDLPDIYEQFKHWDLGDIVGVQGELFKTNTGELTINAEHVELLTKSLRPLPDKFHGLADQELKYRKRYVDLIANEDSRKTFLIRSHLIKAFREFMDDNHFLEVETPMMHPIPGGALARPFVTHHNTLDMTMYLRIAPELYLKRLVVGGFERVYEINRNFRNEGISTRHNPEFTMLEFYQAYADYNDLMNFTEQLFHYLCDKVLATRQIEYQGQVIDFNKPFERLSVKEAILKYHPDIKAQQLETVEGCRTLLNDLGLPYKETDGLGKLQIILFEETVEHQLFQPTFITEYPTEISPLARRSDTNPEVTDRFEFFIAGREIANGFSELNDAEDQAERFRKQVEEKDAGDLEAMHFDSDYIEALEYGLPPTAGEGIGIDRLVMLFTNSQSIRDVILFPHLRQ</sequence>
<comment type="catalytic activity">
    <reaction evidence="1">
        <text>tRNA(Lys) + L-lysine + ATP = L-lysyl-tRNA(Lys) + AMP + diphosphate</text>
        <dbReference type="Rhea" id="RHEA:20792"/>
        <dbReference type="Rhea" id="RHEA-COMP:9696"/>
        <dbReference type="Rhea" id="RHEA-COMP:9697"/>
        <dbReference type="ChEBI" id="CHEBI:30616"/>
        <dbReference type="ChEBI" id="CHEBI:32551"/>
        <dbReference type="ChEBI" id="CHEBI:33019"/>
        <dbReference type="ChEBI" id="CHEBI:78442"/>
        <dbReference type="ChEBI" id="CHEBI:78529"/>
        <dbReference type="ChEBI" id="CHEBI:456215"/>
        <dbReference type="EC" id="6.1.1.6"/>
    </reaction>
</comment>
<comment type="cofactor">
    <cofactor evidence="1">
        <name>Mg(2+)</name>
        <dbReference type="ChEBI" id="CHEBI:18420"/>
    </cofactor>
    <text evidence="1">Binds 3 Mg(2+) ions per subunit.</text>
</comment>
<comment type="subunit">
    <text evidence="1">Homodimer.</text>
</comment>
<comment type="subcellular location">
    <subcellularLocation>
        <location evidence="1">Cytoplasm</location>
    </subcellularLocation>
</comment>
<comment type="similarity">
    <text evidence="1">Belongs to the class-II aminoacyl-tRNA synthetase family.</text>
</comment>
<protein>
    <recommendedName>
        <fullName evidence="1">Lysine--tRNA ligase</fullName>
        <ecNumber evidence="1">6.1.1.6</ecNumber>
    </recommendedName>
    <alternativeName>
        <fullName evidence="1">Lysyl-tRNA synthetase</fullName>
        <shortName evidence="1">LysRS</shortName>
    </alternativeName>
</protein>
<proteinExistence type="inferred from homology"/>
<name>SYK_LEGPC</name>
<accession>A5ICT2</accession>
<evidence type="ECO:0000255" key="1">
    <source>
        <dbReference type="HAMAP-Rule" id="MF_00252"/>
    </source>
</evidence>
<keyword id="KW-0030">Aminoacyl-tRNA synthetase</keyword>
<keyword id="KW-0067">ATP-binding</keyword>
<keyword id="KW-0963">Cytoplasm</keyword>
<keyword id="KW-0436">Ligase</keyword>
<keyword id="KW-0460">Magnesium</keyword>
<keyword id="KW-0479">Metal-binding</keyword>
<keyword id="KW-0547">Nucleotide-binding</keyword>
<keyword id="KW-0648">Protein biosynthesis</keyword>
<reference key="1">
    <citation type="submission" date="2006-11" db="EMBL/GenBank/DDBJ databases">
        <title>Identification and characterization of a new conjugation/ type IVA secretion system (trb/tra) of L. pneumophila Corby localized on a mobile genomic island.</title>
        <authorList>
            <person name="Gloeckner G."/>
            <person name="Albert-Weissenberger C."/>
            <person name="Weinmann E."/>
            <person name="Jacobi S."/>
            <person name="Schunder E."/>
            <person name="Steinert M."/>
            <person name="Buchrieser C."/>
            <person name="Hacker J."/>
            <person name="Heuner K."/>
        </authorList>
    </citation>
    <scope>NUCLEOTIDE SEQUENCE [LARGE SCALE GENOMIC DNA]</scope>
    <source>
        <strain>Corby</strain>
    </source>
</reference>
<gene>
    <name evidence="1" type="primary">lysS</name>
    <name type="ordered locus">LPC_1218</name>
</gene>
<feature type="chain" id="PRO_1000012883" description="Lysine--tRNA ligase">
    <location>
        <begin position="1"/>
        <end position="496"/>
    </location>
</feature>
<feature type="binding site" evidence="1">
    <location>
        <position position="408"/>
    </location>
    <ligand>
        <name>Mg(2+)</name>
        <dbReference type="ChEBI" id="CHEBI:18420"/>
        <label>1</label>
    </ligand>
</feature>
<feature type="binding site" evidence="1">
    <location>
        <position position="415"/>
    </location>
    <ligand>
        <name>Mg(2+)</name>
        <dbReference type="ChEBI" id="CHEBI:18420"/>
        <label>1</label>
    </ligand>
</feature>
<feature type="binding site" evidence="1">
    <location>
        <position position="415"/>
    </location>
    <ligand>
        <name>Mg(2+)</name>
        <dbReference type="ChEBI" id="CHEBI:18420"/>
        <label>2</label>
    </ligand>
</feature>
<dbReference type="EC" id="6.1.1.6" evidence="1"/>
<dbReference type="EMBL" id="CP000675">
    <property type="protein sequence ID" value="ABQ55182.1"/>
    <property type="molecule type" value="Genomic_DNA"/>
</dbReference>
<dbReference type="RefSeq" id="WP_010947503.1">
    <property type="nucleotide sequence ID" value="NZ_JAPMSS010000005.1"/>
</dbReference>
<dbReference type="SMR" id="A5ICT2"/>
<dbReference type="GeneID" id="57035766"/>
<dbReference type="KEGG" id="lpc:LPC_1218"/>
<dbReference type="HOGENOM" id="CLU_008255_6_0_6"/>
<dbReference type="GO" id="GO:0005829">
    <property type="term" value="C:cytosol"/>
    <property type="evidence" value="ECO:0007669"/>
    <property type="project" value="TreeGrafter"/>
</dbReference>
<dbReference type="GO" id="GO:0005524">
    <property type="term" value="F:ATP binding"/>
    <property type="evidence" value="ECO:0007669"/>
    <property type="project" value="UniProtKB-UniRule"/>
</dbReference>
<dbReference type="GO" id="GO:0004824">
    <property type="term" value="F:lysine-tRNA ligase activity"/>
    <property type="evidence" value="ECO:0007669"/>
    <property type="project" value="UniProtKB-UniRule"/>
</dbReference>
<dbReference type="GO" id="GO:0000287">
    <property type="term" value="F:magnesium ion binding"/>
    <property type="evidence" value="ECO:0007669"/>
    <property type="project" value="UniProtKB-UniRule"/>
</dbReference>
<dbReference type="GO" id="GO:0000049">
    <property type="term" value="F:tRNA binding"/>
    <property type="evidence" value="ECO:0007669"/>
    <property type="project" value="TreeGrafter"/>
</dbReference>
<dbReference type="GO" id="GO:0006430">
    <property type="term" value="P:lysyl-tRNA aminoacylation"/>
    <property type="evidence" value="ECO:0007669"/>
    <property type="project" value="UniProtKB-UniRule"/>
</dbReference>
<dbReference type="CDD" id="cd00775">
    <property type="entry name" value="LysRS_core"/>
    <property type="match status" value="1"/>
</dbReference>
<dbReference type="CDD" id="cd04322">
    <property type="entry name" value="LysRS_N"/>
    <property type="match status" value="1"/>
</dbReference>
<dbReference type="FunFam" id="2.40.50.140:FF:000024">
    <property type="entry name" value="Lysine--tRNA ligase"/>
    <property type="match status" value="1"/>
</dbReference>
<dbReference type="FunFam" id="3.30.930.10:FF:000001">
    <property type="entry name" value="Lysine--tRNA ligase"/>
    <property type="match status" value="1"/>
</dbReference>
<dbReference type="Gene3D" id="3.30.930.10">
    <property type="entry name" value="Bira Bifunctional Protein, Domain 2"/>
    <property type="match status" value="1"/>
</dbReference>
<dbReference type="Gene3D" id="2.40.50.140">
    <property type="entry name" value="Nucleic acid-binding proteins"/>
    <property type="match status" value="1"/>
</dbReference>
<dbReference type="HAMAP" id="MF_00252">
    <property type="entry name" value="Lys_tRNA_synth_class2"/>
    <property type="match status" value="1"/>
</dbReference>
<dbReference type="InterPro" id="IPR004364">
    <property type="entry name" value="Aa-tRNA-synt_II"/>
</dbReference>
<dbReference type="InterPro" id="IPR006195">
    <property type="entry name" value="aa-tRNA-synth_II"/>
</dbReference>
<dbReference type="InterPro" id="IPR045864">
    <property type="entry name" value="aa-tRNA-synth_II/BPL/LPL"/>
</dbReference>
<dbReference type="InterPro" id="IPR002313">
    <property type="entry name" value="Lys-tRNA-ligase_II"/>
</dbReference>
<dbReference type="InterPro" id="IPR044136">
    <property type="entry name" value="Lys-tRNA-ligase_II_N"/>
</dbReference>
<dbReference type="InterPro" id="IPR018149">
    <property type="entry name" value="Lys-tRNA-synth_II_C"/>
</dbReference>
<dbReference type="InterPro" id="IPR012340">
    <property type="entry name" value="NA-bd_OB-fold"/>
</dbReference>
<dbReference type="InterPro" id="IPR004365">
    <property type="entry name" value="NA-bd_OB_tRNA"/>
</dbReference>
<dbReference type="NCBIfam" id="TIGR00499">
    <property type="entry name" value="lysS_bact"/>
    <property type="match status" value="1"/>
</dbReference>
<dbReference type="NCBIfam" id="NF001756">
    <property type="entry name" value="PRK00484.1"/>
    <property type="match status" value="1"/>
</dbReference>
<dbReference type="PANTHER" id="PTHR42918:SF15">
    <property type="entry name" value="LYSINE--TRNA LIGASE, CHLOROPLASTIC_MITOCHONDRIAL"/>
    <property type="match status" value="1"/>
</dbReference>
<dbReference type="PANTHER" id="PTHR42918">
    <property type="entry name" value="LYSYL-TRNA SYNTHETASE"/>
    <property type="match status" value="1"/>
</dbReference>
<dbReference type="Pfam" id="PF00152">
    <property type="entry name" value="tRNA-synt_2"/>
    <property type="match status" value="1"/>
</dbReference>
<dbReference type="Pfam" id="PF01336">
    <property type="entry name" value="tRNA_anti-codon"/>
    <property type="match status" value="1"/>
</dbReference>
<dbReference type="PRINTS" id="PR00982">
    <property type="entry name" value="TRNASYNTHLYS"/>
</dbReference>
<dbReference type="SUPFAM" id="SSF55681">
    <property type="entry name" value="Class II aaRS and biotin synthetases"/>
    <property type="match status" value="1"/>
</dbReference>
<dbReference type="SUPFAM" id="SSF50249">
    <property type="entry name" value="Nucleic acid-binding proteins"/>
    <property type="match status" value="1"/>
</dbReference>
<dbReference type="PROSITE" id="PS50862">
    <property type="entry name" value="AA_TRNA_LIGASE_II"/>
    <property type="match status" value="1"/>
</dbReference>
<organism>
    <name type="scientific">Legionella pneumophila (strain Corby)</name>
    <dbReference type="NCBI Taxonomy" id="400673"/>
    <lineage>
        <taxon>Bacteria</taxon>
        <taxon>Pseudomonadati</taxon>
        <taxon>Pseudomonadota</taxon>
        <taxon>Gammaproteobacteria</taxon>
        <taxon>Legionellales</taxon>
        <taxon>Legionellaceae</taxon>
        <taxon>Legionella</taxon>
    </lineage>
</organism>